<keyword id="KW-0067">ATP-binding</keyword>
<keyword id="KW-0235">DNA replication</keyword>
<keyword id="KW-0547">Nucleotide-binding</keyword>
<keyword id="KW-1185">Reference proteome</keyword>
<name>RFCS_METMP</name>
<comment type="function">
    <text evidence="1">Part of the RFC clamp loader complex which loads the PCNA sliding clamp onto DNA.</text>
</comment>
<comment type="subunit">
    <text evidence="1">Heteromultimer composed of small subunits (RfcS) and large subunits (RfcL).</text>
</comment>
<comment type="similarity">
    <text evidence="1">Belongs to the activator 1 small subunits family. RfcS subfamily.</text>
</comment>
<protein>
    <recommendedName>
        <fullName evidence="1">Replication factor C small subunit</fullName>
        <shortName evidence="1">RFC small subunit</shortName>
    </recommendedName>
    <alternativeName>
        <fullName evidence="1">Clamp loader small subunit</fullName>
    </alternativeName>
</protein>
<organism>
    <name type="scientific">Methanococcus maripaludis (strain DSM 14266 / JCM 13030 / NBRC 101832 / S2 / LL)</name>
    <dbReference type="NCBI Taxonomy" id="267377"/>
    <lineage>
        <taxon>Archaea</taxon>
        <taxon>Methanobacteriati</taxon>
        <taxon>Methanobacteriota</taxon>
        <taxon>Methanomada group</taxon>
        <taxon>Methanococci</taxon>
        <taxon>Methanococcales</taxon>
        <taxon>Methanococcaceae</taxon>
        <taxon>Methanococcus</taxon>
    </lineage>
</organism>
<feature type="chain" id="PRO_0000135976" description="Replication factor C small subunit">
    <location>
        <begin position="1"/>
        <end position="315"/>
    </location>
</feature>
<feature type="binding site" evidence="1">
    <location>
        <begin position="43"/>
        <end position="50"/>
    </location>
    <ligand>
        <name>ATP</name>
        <dbReference type="ChEBI" id="CHEBI:30616"/>
    </ligand>
</feature>
<dbReference type="EMBL" id="BX950229">
    <property type="protein sequence ID" value="CAF29983.1"/>
    <property type="molecule type" value="Genomic_DNA"/>
</dbReference>
<dbReference type="RefSeq" id="WP_011170371.1">
    <property type="nucleotide sequence ID" value="NC_005791.1"/>
</dbReference>
<dbReference type="SMR" id="Q6M044"/>
<dbReference type="STRING" id="267377.MMP0427"/>
<dbReference type="EnsemblBacteria" id="CAF29983">
    <property type="protein sequence ID" value="CAF29983"/>
    <property type="gene ID" value="MMP0427"/>
</dbReference>
<dbReference type="GeneID" id="2762083"/>
<dbReference type="KEGG" id="mmp:MMP0427"/>
<dbReference type="PATRIC" id="fig|267377.15.peg.431"/>
<dbReference type="eggNOG" id="arCOG00469">
    <property type="taxonomic scope" value="Archaea"/>
</dbReference>
<dbReference type="HOGENOM" id="CLU_042324_2_1_2"/>
<dbReference type="OrthoDB" id="7928at2157"/>
<dbReference type="Proteomes" id="UP000000590">
    <property type="component" value="Chromosome"/>
</dbReference>
<dbReference type="GO" id="GO:0005663">
    <property type="term" value="C:DNA replication factor C complex"/>
    <property type="evidence" value="ECO:0007669"/>
    <property type="project" value="InterPro"/>
</dbReference>
<dbReference type="GO" id="GO:0005524">
    <property type="term" value="F:ATP binding"/>
    <property type="evidence" value="ECO:0007669"/>
    <property type="project" value="UniProtKB-UniRule"/>
</dbReference>
<dbReference type="GO" id="GO:0016887">
    <property type="term" value="F:ATP hydrolysis activity"/>
    <property type="evidence" value="ECO:0007669"/>
    <property type="project" value="InterPro"/>
</dbReference>
<dbReference type="GO" id="GO:0003677">
    <property type="term" value="F:DNA binding"/>
    <property type="evidence" value="ECO:0007669"/>
    <property type="project" value="InterPro"/>
</dbReference>
<dbReference type="GO" id="GO:0003689">
    <property type="term" value="F:DNA clamp loader activity"/>
    <property type="evidence" value="ECO:0007669"/>
    <property type="project" value="UniProtKB-UniRule"/>
</dbReference>
<dbReference type="GO" id="GO:0006281">
    <property type="term" value="P:DNA repair"/>
    <property type="evidence" value="ECO:0007669"/>
    <property type="project" value="TreeGrafter"/>
</dbReference>
<dbReference type="GO" id="GO:0006261">
    <property type="term" value="P:DNA-templated DNA replication"/>
    <property type="evidence" value="ECO:0007669"/>
    <property type="project" value="TreeGrafter"/>
</dbReference>
<dbReference type="CDD" id="cd00009">
    <property type="entry name" value="AAA"/>
    <property type="match status" value="1"/>
</dbReference>
<dbReference type="CDD" id="cd18140">
    <property type="entry name" value="HLD_clamp_RFC"/>
    <property type="match status" value="1"/>
</dbReference>
<dbReference type="FunFam" id="1.20.272.10:FF:000029">
    <property type="entry name" value="Replication factor C small subunit"/>
    <property type="match status" value="1"/>
</dbReference>
<dbReference type="FunFam" id="3.40.50.300:FF:000129">
    <property type="entry name" value="Replication factor C subunit 5"/>
    <property type="match status" value="1"/>
</dbReference>
<dbReference type="Gene3D" id="1.10.8.60">
    <property type="match status" value="1"/>
</dbReference>
<dbReference type="Gene3D" id="1.20.272.10">
    <property type="match status" value="1"/>
</dbReference>
<dbReference type="Gene3D" id="3.40.50.300">
    <property type="entry name" value="P-loop containing nucleotide triphosphate hydrolases"/>
    <property type="match status" value="1"/>
</dbReference>
<dbReference type="HAMAP" id="MF_01509">
    <property type="entry name" value="RfcS"/>
    <property type="match status" value="1"/>
</dbReference>
<dbReference type="InterPro" id="IPR003593">
    <property type="entry name" value="AAA+_ATPase"/>
</dbReference>
<dbReference type="InterPro" id="IPR003959">
    <property type="entry name" value="ATPase_AAA_core"/>
</dbReference>
<dbReference type="InterPro" id="IPR008921">
    <property type="entry name" value="DNA_pol3_clamp-load_cplx_C"/>
</dbReference>
<dbReference type="InterPro" id="IPR050238">
    <property type="entry name" value="DNA_Rep/Repair_Clamp_Loader"/>
</dbReference>
<dbReference type="InterPro" id="IPR027417">
    <property type="entry name" value="P-loop_NTPase"/>
</dbReference>
<dbReference type="InterPro" id="IPR023748">
    <property type="entry name" value="Rep_factor-C_ssu_arc"/>
</dbReference>
<dbReference type="InterPro" id="IPR013748">
    <property type="entry name" value="Rep_factorC_C"/>
</dbReference>
<dbReference type="InterPro" id="IPR047854">
    <property type="entry name" value="RFC_lid"/>
</dbReference>
<dbReference type="NCBIfam" id="NF001679">
    <property type="entry name" value="PRK00440.1"/>
    <property type="match status" value="1"/>
</dbReference>
<dbReference type="PANTHER" id="PTHR11669">
    <property type="entry name" value="REPLICATION FACTOR C / DNA POLYMERASE III GAMMA-TAU SUBUNIT"/>
    <property type="match status" value="1"/>
</dbReference>
<dbReference type="PANTHER" id="PTHR11669:SF20">
    <property type="entry name" value="REPLICATION FACTOR C SUBUNIT 4"/>
    <property type="match status" value="1"/>
</dbReference>
<dbReference type="Pfam" id="PF00004">
    <property type="entry name" value="AAA"/>
    <property type="match status" value="1"/>
</dbReference>
<dbReference type="Pfam" id="PF21960">
    <property type="entry name" value="RCF1-5-like_lid"/>
    <property type="match status" value="1"/>
</dbReference>
<dbReference type="Pfam" id="PF08542">
    <property type="entry name" value="Rep_fac_C"/>
    <property type="match status" value="1"/>
</dbReference>
<dbReference type="SMART" id="SM00382">
    <property type="entry name" value="AAA"/>
    <property type="match status" value="1"/>
</dbReference>
<dbReference type="SUPFAM" id="SSF52540">
    <property type="entry name" value="P-loop containing nucleoside triphosphate hydrolases"/>
    <property type="match status" value="1"/>
</dbReference>
<dbReference type="SUPFAM" id="SSF48019">
    <property type="entry name" value="post-AAA+ oligomerization domain-like"/>
    <property type="match status" value="1"/>
</dbReference>
<gene>
    <name evidence="1" type="primary">rfcS</name>
    <name type="synonym">rfcA</name>
    <name type="ordered locus">MMP0427</name>
</gene>
<proteinExistence type="inferred from homology"/>
<evidence type="ECO:0000255" key="1">
    <source>
        <dbReference type="HAMAP-Rule" id="MF_01509"/>
    </source>
</evidence>
<reference key="1">
    <citation type="journal article" date="2004" name="J. Bacteriol.">
        <title>Complete genome sequence of the genetically tractable hydrogenotrophic methanogen Methanococcus maripaludis.</title>
        <authorList>
            <person name="Hendrickson E.L."/>
            <person name="Kaul R."/>
            <person name="Zhou Y."/>
            <person name="Bovee D."/>
            <person name="Chapman P."/>
            <person name="Chung J."/>
            <person name="Conway de Macario E."/>
            <person name="Dodsworth J.A."/>
            <person name="Gillett W."/>
            <person name="Graham D.E."/>
            <person name="Hackett M."/>
            <person name="Haydock A.K."/>
            <person name="Kang A."/>
            <person name="Land M.L."/>
            <person name="Levy R."/>
            <person name="Lie T.J."/>
            <person name="Major T.A."/>
            <person name="Moore B.C."/>
            <person name="Porat I."/>
            <person name="Palmeiri A."/>
            <person name="Rouse G."/>
            <person name="Saenphimmachak C."/>
            <person name="Soell D."/>
            <person name="Van Dien S."/>
            <person name="Wang T."/>
            <person name="Whitman W.B."/>
            <person name="Xia Q."/>
            <person name="Zhang Y."/>
            <person name="Larimer F.W."/>
            <person name="Olson M.V."/>
            <person name="Leigh J.A."/>
        </authorList>
    </citation>
    <scope>NUCLEOTIDE SEQUENCE [LARGE SCALE GENOMIC DNA]</scope>
    <source>
        <strain>DSM 14266 / JCM 13030 / NBRC 101832 / S2 / LL</strain>
    </source>
</reference>
<sequence>MQKPWVEKYRPETLSEVVGHHEIIKRLTNYVEKKSMPHLLFSGSPGVGKTTAALALAKDLYGDTWRENFLELNSSDERGIDVIRTKVKDFARTKPIGDAPFKVIFLDESDALTSDAQNALRRTMEKYSDICRFILSCNYPSKIIPPIQSRCAIFRFSPLKTEDLVENLKDISEKENLNLEKGGIDAIIYVSEGDMRKAINVLQTAAAVSDEITEEIVYKVASKARPDEIKKMTQLALNGKFVEAREQLYNLMIDWGMSGEDILIQVFREVPNLDISEKEKVHLVEAIGECDFRIVEGSNERIQLSALLAKMGILE</sequence>
<accession>Q6M044</accession>